<sequence length="162" mass="18387">MLTMNDAPFWKTKSLTEMTGEEWESLCDGCGLCCLNKLEDWDTGEVVFTSVRCVLLDGESCRCSDYENRRATVPDCIQLDLKKVHEIGWLPPTCAYALVRDGKDLYWWHYLVSGDIETVHEAGISARGRTVSEAHVDVDDFEDYVVDWPLTVGEKAGEKQRT</sequence>
<feature type="chain" id="PRO_0000214574" description="UPF0260 protein Atu0932">
    <location>
        <begin position="1"/>
        <end position="162"/>
    </location>
</feature>
<proteinExistence type="inferred from homology"/>
<keyword id="KW-1185">Reference proteome</keyword>
<dbReference type="EMBL" id="AE007869">
    <property type="protein sequence ID" value="AAK86737.2"/>
    <property type="status" value="ALT_INIT"/>
    <property type="molecule type" value="Genomic_DNA"/>
</dbReference>
<dbReference type="PIR" id="AD2691">
    <property type="entry name" value="AD2691"/>
</dbReference>
<dbReference type="PIR" id="H97472">
    <property type="entry name" value="H97472"/>
</dbReference>
<dbReference type="RefSeq" id="NP_353952.2">
    <property type="nucleotide sequence ID" value="NC_003062.2"/>
</dbReference>
<dbReference type="RefSeq" id="WP_010971263.1">
    <property type="nucleotide sequence ID" value="NC_003062.2"/>
</dbReference>
<dbReference type="STRING" id="176299.Atu0932"/>
<dbReference type="EnsemblBacteria" id="AAK86737">
    <property type="protein sequence ID" value="AAK86737"/>
    <property type="gene ID" value="Atu0932"/>
</dbReference>
<dbReference type="GeneID" id="1132970"/>
<dbReference type="KEGG" id="atu:Atu0932"/>
<dbReference type="PATRIC" id="fig|176299.10.peg.935"/>
<dbReference type="eggNOG" id="COG2983">
    <property type="taxonomic scope" value="Bacteria"/>
</dbReference>
<dbReference type="HOGENOM" id="CLU_109769_0_1_5"/>
<dbReference type="OrthoDB" id="9786855at2"/>
<dbReference type="Proteomes" id="UP000000813">
    <property type="component" value="Chromosome circular"/>
</dbReference>
<dbReference type="HAMAP" id="MF_00676">
    <property type="entry name" value="UPF0260"/>
    <property type="match status" value="1"/>
</dbReference>
<dbReference type="InterPro" id="IPR005358">
    <property type="entry name" value="Puta_zinc/iron-chelating_dom"/>
</dbReference>
<dbReference type="InterPro" id="IPR008228">
    <property type="entry name" value="UCP006173"/>
</dbReference>
<dbReference type="NCBIfam" id="NF003501">
    <property type="entry name" value="PRK05170.1-5"/>
    <property type="match status" value="1"/>
</dbReference>
<dbReference type="NCBIfam" id="NF003507">
    <property type="entry name" value="PRK05170.2-5"/>
    <property type="match status" value="1"/>
</dbReference>
<dbReference type="PANTHER" id="PTHR37421">
    <property type="entry name" value="UPF0260 PROTEIN YCGN"/>
    <property type="match status" value="1"/>
</dbReference>
<dbReference type="PANTHER" id="PTHR37421:SF1">
    <property type="entry name" value="UPF0260 PROTEIN YCGN"/>
    <property type="match status" value="1"/>
</dbReference>
<dbReference type="Pfam" id="PF03692">
    <property type="entry name" value="CxxCxxCC"/>
    <property type="match status" value="1"/>
</dbReference>
<dbReference type="PIRSF" id="PIRSF006173">
    <property type="entry name" value="UCP006173"/>
    <property type="match status" value="1"/>
</dbReference>
<name>Y932_AGRFC</name>
<comment type="similarity">
    <text evidence="1">Belongs to the UPF0260 family.</text>
</comment>
<comment type="sequence caution" evidence="2">
    <conflict type="erroneous initiation">
        <sequence resource="EMBL-CDS" id="AAK86737"/>
    </conflict>
</comment>
<gene>
    <name type="ordered locus">Atu0932</name>
    <name type="ORF">AGR_C_1698</name>
</gene>
<organism>
    <name type="scientific">Agrobacterium fabrum (strain C58 / ATCC 33970)</name>
    <name type="common">Agrobacterium tumefaciens (strain C58)</name>
    <dbReference type="NCBI Taxonomy" id="176299"/>
    <lineage>
        <taxon>Bacteria</taxon>
        <taxon>Pseudomonadati</taxon>
        <taxon>Pseudomonadota</taxon>
        <taxon>Alphaproteobacteria</taxon>
        <taxon>Hyphomicrobiales</taxon>
        <taxon>Rhizobiaceae</taxon>
        <taxon>Rhizobium/Agrobacterium group</taxon>
        <taxon>Agrobacterium</taxon>
        <taxon>Agrobacterium tumefaciens complex</taxon>
    </lineage>
</organism>
<evidence type="ECO:0000255" key="1">
    <source>
        <dbReference type="HAMAP-Rule" id="MF_00676"/>
    </source>
</evidence>
<evidence type="ECO:0000305" key="2"/>
<protein>
    <recommendedName>
        <fullName evidence="1">UPF0260 protein Atu0932</fullName>
    </recommendedName>
</protein>
<reference key="1">
    <citation type="journal article" date="2001" name="Science">
        <title>The genome of the natural genetic engineer Agrobacterium tumefaciens C58.</title>
        <authorList>
            <person name="Wood D.W."/>
            <person name="Setubal J.C."/>
            <person name="Kaul R."/>
            <person name="Monks D.E."/>
            <person name="Kitajima J.P."/>
            <person name="Okura V.K."/>
            <person name="Zhou Y."/>
            <person name="Chen L."/>
            <person name="Wood G.E."/>
            <person name="Almeida N.F. Jr."/>
            <person name="Woo L."/>
            <person name="Chen Y."/>
            <person name="Paulsen I.T."/>
            <person name="Eisen J.A."/>
            <person name="Karp P.D."/>
            <person name="Bovee D. Sr."/>
            <person name="Chapman P."/>
            <person name="Clendenning J."/>
            <person name="Deatherage G."/>
            <person name="Gillet W."/>
            <person name="Grant C."/>
            <person name="Kutyavin T."/>
            <person name="Levy R."/>
            <person name="Li M.-J."/>
            <person name="McClelland E."/>
            <person name="Palmieri A."/>
            <person name="Raymond C."/>
            <person name="Rouse G."/>
            <person name="Saenphimmachak C."/>
            <person name="Wu Z."/>
            <person name="Romero P."/>
            <person name="Gordon D."/>
            <person name="Zhang S."/>
            <person name="Yoo H."/>
            <person name="Tao Y."/>
            <person name="Biddle P."/>
            <person name="Jung M."/>
            <person name="Krespan W."/>
            <person name="Perry M."/>
            <person name="Gordon-Kamm B."/>
            <person name="Liao L."/>
            <person name="Kim S."/>
            <person name="Hendrick C."/>
            <person name="Zhao Z.-Y."/>
            <person name="Dolan M."/>
            <person name="Chumley F."/>
            <person name="Tingey S.V."/>
            <person name="Tomb J.-F."/>
            <person name="Gordon M.P."/>
            <person name="Olson M.V."/>
            <person name="Nester E.W."/>
        </authorList>
    </citation>
    <scope>NUCLEOTIDE SEQUENCE [LARGE SCALE GENOMIC DNA]</scope>
    <source>
        <strain>C58 / ATCC 33970</strain>
    </source>
</reference>
<reference key="2">
    <citation type="journal article" date="2001" name="Science">
        <title>Genome sequence of the plant pathogen and biotechnology agent Agrobacterium tumefaciens C58.</title>
        <authorList>
            <person name="Goodner B."/>
            <person name="Hinkle G."/>
            <person name="Gattung S."/>
            <person name="Miller N."/>
            <person name="Blanchard M."/>
            <person name="Qurollo B."/>
            <person name="Goldman B.S."/>
            <person name="Cao Y."/>
            <person name="Askenazi M."/>
            <person name="Halling C."/>
            <person name="Mullin L."/>
            <person name="Houmiel K."/>
            <person name="Gordon J."/>
            <person name="Vaudin M."/>
            <person name="Iartchouk O."/>
            <person name="Epp A."/>
            <person name="Liu F."/>
            <person name="Wollam C."/>
            <person name="Allinger M."/>
            <person name="Doughty D."/>
            <person name="Scott C."/>
            <person name="Lappas C."/>
            <person name="Markelz B."/>
            <person name="Flanagan C."/>
            <person name="Crowell C."/>
            <person name="Gurson J."/>
            <person name="Lomo C."/>
            <person name="Sear C."/>
            <person name="Strub G."/>
            <person name="Cielo C."/>
            <person name="Slater S."/>
        </authorList>
    </citation>
    <scope>NUCLEOTIDE SEQUENCE [LARGE SCALE GENOMIC DNA]</scope>
    <source>
        <strain>C58 / ATCC 33970</strain>
    </source>
</reference>
<accession>Q8UGV3</accession>